<proteinExistence type="inferred from homology"/>
<protein>
    <recommendedName>
        <fullName>AP-3 complex subunit beta</fullName>
    </recommendedName>
    <alternativeName>
        <fullName>Adaptor-related protein complex 3 subunit beta</fullName>
    </alternativeName>
    <alternativeName>
        <fullName>Beta-3-adaptin</fullName>
    </alternativeName>
    <alternativeName>
        <fullName>Clathrin assembly protein complex 3 beta large chain</fullName>
    </alternativeName>
    <alternativeName>
        <fullName>Clathrin assembly protein large beta chain</fullName>
    </alternativeName>
</protein>
<sequence>MAESMQRIASAFESARDLTLEAAAVASSRLGESSYFHYSKSIDSESLPGLLNSRYTREVRDGMKRVMSLMGSGDSSIELETHFADIVKNIGSDDVKVRRMVSVYLLRYAETNPNLALLSINSIQRSLSDSNPDVRALALKTLSDINIASLYPIILHSLKKTVIDSSEVVRCQVAMTLLKLFKEQGISIKDDVMPMLKSLLADSEPSVVSAALLLFQKAFAQELQLLHGHYRRYCSILNQLTENAQAIMIDIFIAYAKEYLPRPMVRDTSSDAEAIQLPDSFNQIPFPVYDVEYDHDLNLFLSSLKKLLHSPNAMVIVAVSKAFYQLSSPKTFKDSGIVDSLLRLTVSSYICSEIKELVLQSILVYCCSDPSLFRSHYKRFFLMPSDTENISIFKLKILSILVSDSNCKHIVNELKFVAGTEQSASILVEVSNTLSVCAQISSKWSSQIISWLLDRISSNTPIDKEVTASQINVLRSLIQKDPIKHIATVVKLSKMLSNHDLLPSAKAPIIWLLGEYVQVEPRICPDVLRRLLPQFSKEHAHVRLQILNLAAKLLSHDVDSYSGDMEYDIGTSRIGQMFEAALQLAKFDDEYDVRDRARMLASIFEQKRYEIATLLLQAPKPYPMASLNYCRDSFNLSALNLYPDMENYYELLPWNADPQASDRTPCEVKDYSKLKNSFSSSSYFGRNEVEFTNKPKRSASVSSVPSNTFTSSHGKKYQLQSLDEFFSDVSARQSVPKAKRVIIEESTSEETDHTDDESGSSSGDESTESSYVSSSEEETTE</sequence>
<evidence type="ECO:0000250" key="1"/>
<evidence type="ECO:0000250" key="2">
    <source>
        <dbReference type="UniProtKB" id="P46682"/>
    </source>
</evidence>
<evidence type="ECO:0000256" key="3">
    <source>
        <dbReference type="SAM" id="MobiDB-lite"/>
    </source>
</evidence>
<evidence type="ECO:0000305" key="4"/>
<gene>
    <name type="primary">APL6</name>
    <name type="ordered locus">ADR335C</name>
</gene>
<dbReference type="EMBL" id="AE016817">
    <property type="protein sequence ID" value="AAS52255.2"/>
    <property type="molecule type" value="Genomic_DNA"/>
</dbReference>
<dbReference type="RefSeq" id="NP_984431.2">
    <property type="nucleotide sequence ID" value="NM_209784.2"/>
</dbReference>
<dbReference type="SMR" id="Q759E2"/>
<dbReference type="FunCoup" id="Q759E2">
    <property type="interactions" value="485"/>
</dbReference>
<dbReference type="STRING" id="284811.Q759E2"/>
<dbReference type="EnsemblFungi" id="AAS52255">
    <property type="protein sequence ID" value="AAS52255"/>
    <property type="gene ID" value="AGOS_ADR335C"/>
</dbReference>
<dbReference type="GeneID" id="4620597"/>
<dbReference type="KEGG" id="ago:AGOS_ADR335C"/>
<dbReference type="eggNOG" id="KOG1060">
    <property type="taxonomic scope" value="Eukaryota"/>
</dbReference>
<dbReference type="HOGENOM" id="CLU_006320_3_2_1"/>
<dbReference type="InParanoid" id="Q759E2"/>
<dbReference type="OMA" id="HFLVRST"/>
<dbReference type="OrthoDB" id="10254310at2759"/>
<dbReference type="Proteomes" id="UP000000591">
    <property type="component" value="Chromosome IV"/>
</dbReference>
<dbReference type="GO" id="GO:0030123">
    <property type="term" value="C:AP-3 adaptor complex"/>
    <property type="evidence" value="ECO:0007669"/>
    <property type="project" value="EnsemblFungi"/>
</dbReference>
<dbReference type="GO" id="GO:0030665">
    <property type="term" value="C:clathrin-coated vesicle membrane"/>
    <property type="evidence" value="ECO:0007669"/>
    <property type="project" value="UniProtKB-SubCell"/>
</dbReference>
<dbReference type="GO" id="GO:0005794">
    <property type="term" value="C:Golgi apparatus"/>
    <property type="evidence" value="ECO:0007669"/>
    <property type="project" value="UniProtKB-SubCell"/>
</dbReference>
<dbReference type="GO" id="GO:0006896">
    <property type="term" value="P:Golgi to vacuole transport"/>
    <property type="evidence" value="ECO:0007669"/>
    <property type="project" value="EnsemblFungi"/>
</dbReference>
<dbReference type="GO" id="GO:0006623">
    <property type="term" value="P:protein targeting to vacuole"/>
    <property type="evidence" value="ECO:0007669"/>
    <property type="project" value="EnsemblFungi"/>
</dbReference>
<dbReference type="Gene3D" id="1.25.10.10">
    <property type="entry name" value="Leucine-rich Repeat Variant"/>
    <property type="match status" value="1"/>
</dbReference>
<dbReference type="InterPro" id="IPR026739">
    <property type="entry name" value="AP_beta"/>
</dbReference>
<dbReference type="InterPro" id="IPR011989">
    <property type="entry name" value="ARM-like"/>
</dbReference>
<dbReference type="InterPro" id="IPR016024">
    <property type="entry name" value="ARM-type_fold"/>
</dbReference>
<dbReference type="InterPro" id="IPR002553">
    <property type="entry name" value="Clathrin/coatomer_adapt-like_N"/>
</dbReference>
<dbReference type="PANTHER" id="PTHR11134">
    <property type="entry name" value="ADAPTOR COMPLEX SUBUNIT BETA FAMILY MEMBER"/>
    <property type="match status" value="1"/>
</dbReference>
<dbReference type="Pfam" id="PF01602">
    <property type="entry name" value="Adaptin_N"/>
    <property type="match status" value="1"/>
</dbReference>
<dbReference type="SUPFAM" id="SSF48371">
    <property type="entry name" value="ARM repeat"/>
    <property type="match status" value="1"/>
</dbReference>
<feature type="chain" id="PRO_0000227677" description="AP-3 complex subunit beta">
    <location>
        <begin position="1"/>
        <end position="781"/>
    </location>
</feature>
<feature type="repeat" description="HEAT 1">
    <location>
        <begin position="113"/>
        <end position="151"/>
    </location>
</feature>
<feature type="repeat" description="HEAT 2">
    <location>
        <begin position="153"/>
        <end position="186"/>
    </location>
</feature>
<feature type="repeat" description="HEAT 3">
    <location>
        <begin position="187"/>
        <end position="224"/>
    </location>
</feature>
<feature type="repeat" description="HEAT 4">
    <location>
        <begin position="294"/>
        <end position="332"/>
    </location>
</feature>
<feature type="repeat" description="HEAT 5">
    <location>
        <begin position="521"/>
        <end position="559"/>
    </location>
</feature>
<feature type="region of interest" description="Disordered" evidence="3">
    <location>
        <begin position="694"/>
        <end position="713"/>
    </location>
</feature>
<feature type="region of interest" description="Disordered" evidence="3">
    <location>
        <begin position="731"/>
        <end position="781"/>
    </location>
</feature>
<feature type="compositionally biased region" description="Polar residues" evidence="3">
    <location>
        <begin position="699"/>
        <end position="712"/>
    </location>
</feature>
<feature type="compositionally biased region" description="Acidic residues" evidence="3">
    <location>
        <begin position="746"/>
        <end position="758"/>
    </location>
</feature>
<feature type="compositionally biased region" description="Low complexity" evidence="3">
    <location>
        <begin position="759"/>
        <end position="774"/>
    </location>
</feature>
<comment type="function">
    <text evidence="1">Part of the AP-3 complex, an adaptor-related complex which is not clathrin-associated. The complex is associated with the Golgi region as well as more peripheral structures. It facilitates the budding of vesicles from the Golgi membrane and may be directly involved in trafficking to the vacuole (By similarity).</text>
</comment>
<comment type="subunit">
    <text evidence="1">Adaptor protein complex 3 (AP-3) is a heterotetramer composed of 2 large adaptins (APL5 and APL6), a medium adaptin (APM3) and a small adaptin (APS3).</text>
</comment>
<comment type="subcellular location">
    <subcellularLocation>
        <location evidence="2">Golgi apparatus</location>
    </subcellularLocation>
    <subcellularLocation>
        <location evidence="2">Cytoplasmic vesicle</location>
        <location evidence="2">Clathrin-coated vesicle membrane</location>
        <topology evidence="2">Peripheral membrane protein</topology>
        <orientation evidence="2">Cytoplasmic side</orientation>
    </subcellularLocation>
    <text evidence="2">Component of the coat surrounding the cytoplasmic face of coated vesicles located at the Golgi complex.</text>
</comment>
<comment type="similarity">
    <text evidence="4">Belongs to the adaptor complexes large subunit family.</text>
</comment>
<keyword id="KW-0968">Cytoplasmic vesicle</keyword>
<keyword id="KW-0333">Golgi apparatus</keyword>
<keyword id="KW-0472">Membrane</keyword>
<keyword id="KW-0653">Protein transport</keyword>
<keyword id="KW-1185">Reference proteome</keyword>
<keyword id="KW-0677">Repeat</keyword>
<keyword id="KW-0813">Transport</keyword>
<name>AP3B_EREGS</name>
<reference key="1">
    <citation type="journal article" date="2004" name="Science">
        <title>The Ashbya gossypii genome as a tool for mapping the ancient Saccharomyces cerevisiae genome.</title>
        <authorList>
            <person name="Dietrich F.S."/>
            <person name="Voegeli S."/>
            <person name="Brachat S."/>
            <person name="Lerch A."/>
            <person name="Gates K."/>
            <person name="Steiner S."/>
            <person name="Mohr C."/>
            <person name="Poehlmann R."/>
            <person name="Luedi P."/>
            <person name="Choi S."/>
            <person name="Wing R.A."/>
            <person name="Flavier A."/>
            <person name="Gaffney T.D."/>
            <person name="Philippsen P."/>
        </authorList>
    </citation>
    <scope>NUCLEOTIDE SEQUENCE [LARGE SCALE GENOMIC DNA]</scope>
    <source>
        <strain>ATCC 10895 / CBS 109.51 / FGSC 9923 / NRRL Y-1056</strain>
    </source>
</reference>
<reference key="2">
    <citation type="journal article" date="2013" name="G3 (Bethesda)">
        <title>Genomes of Ashbya fungi isolated from insects reveal four mating-type loci, numerous translocations, lack of transposons, and distinct gene duplications.</title>
        <authorList>
            <person name="Dietrich F.S."/>
            <person name="Voegeli S."/>
            <person name="Kuo S."/>
            <person name="Philippsen P."/>
        </authorList>
    </citation>
    <scope>GENOME REANNOTATION</scope>
    <scope>SEQUENCE REVISION TO 345</scope>
    <source>
        <strain>ATCC 10895 / CBS 109.51 / FGSC 9923 / NRRL Y-1056</strain>
    </source>
</reference>
<organism>
    <name type="scientific">Eremothecium gossypii (strain ATCC 10895 / CBS 109.51 / FGSC 9923 / NRRL Y-1056)</name>
    <name type="common">Yeast</name>
    <name type="synonym">Ashbya gossypii</name>
    <dbReference type="NCBI Taxonomy" id="284811"/>
    <lineage>
        <taxon>Eukaryota</taxon>
        <taxon>Fungi</taxon>
        <taxon>Dikarya</taxon>
        <taxon>Ascomycota</taxon>
        <taxon>Saccharomycotina</taxon>
        <taxon>Saccharomycetes</taxon>
        <taxon>Saccharomycetales</taxon>
        <taxon>Saccharomycetaceae</taxon>
        <taxon>Eremothecium</taxon>
    </lineage>
</organism>
<accession>Q759E2</accession>